<gene>
    <name evidence="1" type="primary">prmA</name>
    <name type="ordered locus">BPP3915</name>
</gene>
<sequence length="307" mass="32461">MRELVLNCREAQADALSDALLEAGVLSVSVEDADLGTEAERPLFGEPGTEPQVQAWERNCVVALLPGGADPAQILEQAIAAAGLDPALAHGWSLREVPDADWVRLTQSQFGPIPISERLWIVPSWHRDDPAVPGLAPDAARDAIHIELDPGLAFGTGSHPTTHLCLAWLEAELPAGARLLDYGCGSGILAIAARKLGAGETVAVDIDPQAVQSTVDNAEVNQVRLQAMLPDALPAGEFQVVVANILSNPLKVLAPMLAGRVAPGGHLVLSGVLERQADEVAAAYAPWLTMSVWRERDGWVCLHGVKA</sequence>
<comment type="function">
    <text evidence="1">Methylates ribosomal protein L11.</text>
</comment>
<comment type="catalytic activity">
    <reaction evidence="1">
        <text>L-lysyl-[protein] + 3 S-adenosyl-L-methionine = N(6),N(6),N(6)-trimethyl-L-lysyl-[protein] + 3 S-adenosyl-L-homocysteine + 3 H(+)</text>
        <dbReference type="Rhea" id="RHEA:54192"/>
        <dbReference type="Rhea" id="RHEA-COMP:9752"/>
        <dbReference type="Rhea" id="RHEA-COMP:13826"/>
        <dbReference type="ChEBI" id="CHEBI:15378"/>
        <dbReference type="ChEBI" id="CHEBI:29969"/>
        <dbReference type="ChEBI" id="CHEBI:57856"/>
        <dbReference type="ChEBI" id="CHEBI:59789"/>
        <dbReference type="ChEBI" id="CHEBI:61961"/>
    </reaction>
</comment>
<comment type="subcellular location">
    <subcellularLocation>
        <location evidence="1">Cytoplasm</location>
    </subcellularLocation>
</comment>
<comment type="similarity">
    <text evidence="1">Belongs to the methyltransferase superfamily. PrmA family.</text>
</comment>
<accession>Q7W3W2</accession>
<reference key="1">
    <citation type="journal article" date="2003" name="Nat. Genet.">
        <title>Comparative analysis of the genome sequences of Bordetella pertussis, Bordetella parapertussis and Bordetella bronchiseptica.</title>
        <authorList>
            <person name="Parkhill J."/>
            <person name="Sebaihia M."/>
            <person name="Preston A."/>
            <person name="Murphy L.D."/>
            <person name="Thomson N.R."/>
            <person name="Harris D.E."/>
            <person name="Holden M.T.G."/>
            <person name="Churcher C.M."/>
            <person name="Bentley S.D."/>
            <person name="Mungall K.L."/>
            <person name="Cerdeno-Tarraga A.-M."/>
            <person name="Temple L."/>
            <person name="James K.D."/>
            <person name="Harris B."/>
            <person name="Quail M.A."/>
            <person name="Achtman M."/>
            <person name="Atkin R."/>
            <person name="Baker S."/>
            <person name="Basham D."/>
            <person name="Bason N."/>
            <person name="Cherevach I."/>
            <person name="Chillingworth T."/>
            <person name="Collins M."/>
            <person name="Cronin A."/>
            <person name="Davis P."/>
            <person name="Doggett J."/>
            <person name="Feltwell T."/>
            <person name="Goble A."/>
            <person name="Hamlin N."/>
            <person name="Hauser H."/>
            <person name="Holroyd S."/>
            <person name="Jagels K."/>
            <person name="Leather S."/>
            <person name="Moule S."/>
            <person name="Norberczak H."/>
            <person name="O'Neil S."/>
            <person name="Ormond D."/>
            <person name="Price C."/>
            <person name="Rabbinowitsch E."/>
            <person name="Rutter S."/>
            <person name="Sanders M."/>
            <person name="Saunders D."/>
            <person name="Seeger K."/>
            <person name="Sharp S."/>
            <person name="Simmonds M."/>
            <person name="Skelton J."/>
            <person name="Squares R."/>
            <person name="Squares S."/>
            <person name="Stevens K."/>
            <person name="Unwin L."/>
            <person name="Whitehead S."/>
            <person name="Barrell B.G."/>
            <person name="Maskell D.J."/>
        </authorList>
    </citation>
    <scope>NUCLEOTIDE SEQUENCE [LARGE SCALE GENOMIC DNA]</scope>
    <source>
        <strain>12822 / ATCC BAA-587 / NCTC 13253</strain>
    </source>
</reference>
<keyword id="KW-0963">Cytoplasm</keyword>
<keyword id="KW-0489">Methyltransferase</keyword>
<keyword id="KW-0949">S-adenosyl-L-methionine</keyword>
<keyword id="KW-0808">Transferase</keyword>
<protein>
    <recommendedName>
        <fullName evidence="1">Ribosomal protein L11 methyltransferase</fullName>
        <shortName evidence="1">L11 Mtase</shortName>
        <ecNumber evidence="1">2.1.1.-</ecNumber>
    </recommendedName>
</protein>
<dbReference type="EC" id="2.1.1.-" evidence="1"/>
<dbReference type="EMBL" id="BX640435">
    <property type="protein sequence ID" value="CAE39198.1"/>
    <property type="molecule type" value="Genomic_DNA"/>
</dbReference>
<dbReference type="RefSeq" id="WP_010929307.1">
    <property type="nucleotide sequence ID" value="NC_002928.3"/>
</dbReference>
<dbReference type="SMR" id="Q7W3W2"/>
<dbReference type="GeneID" id="93205714"/>
<dbReference type="KEGG" id="bpa:BPP3915"/>
<dbReference type="HOGENOM" id="CLU_049382_4_1_4"/>
<dbReference type="Proteomes" id="UP000001421">
    <property type="component" value="Chromosome"/>
</dbReference>
<dbReference type="GO" id="GO:0005829">
    <property type="term" value="C:cytosol"/>
    <property type="evidence" value="ECO:0007669"/>
    <property type="project" value="TreeGrafter"/>
</dbReference>
<dbReference type="GO" id="GO:0016279">
    <property type="term" value="F:protein-lysine N-methyltransferase activity"/>
    <property type="evidence" value="ECO:0007669"/>
    <property type="project" value="TreeGrafter"/>
</dbReference>
<dbReference type="GO" id="GO:0032259">
    <property type="term" value="P:methylation"/>
    <property type="evidence" value="ECO:0007669"/>
    <property type="project" value="UniProtKB-KW"/>
</dbReference>
<dbReference type="CDD" id="cd02440">
    <property type="entry name" value="AdoMet_MTases"/>
    <property type="match status" value="1"/>
</dbReference>
<dbReference type="Gene3D" id="3.40.50.150">
    <property type="entry name" value="Vaccinia Virus protein VP39"/>
    <property type="match status" value="1"/>
</dbReference>
<dbReference type="HAMAP" id="MF_00735">
    <property type="entry name" value="Methyltr_PrmA"/>
    <property type="match status" value="1"/>
</dbReference>
<dbReference type="InterPro" id="IPR050078">
    <property type="entry name" value="Ribosomal_L11_MeTrfase_PrmA"/>
</dbReference>
<dbReference type="InterPro" id="IPR004498">
    <property type="entry name" value="Ribosomal_PrmA_MeTrfase"/>
</dbReference>
<dbReference type="InterPro" id="IPR029063">
    <property type="entry name" value="SAM-dependent_MTases_sf"/>
</dbReference>
<dbReference type="NCBIfam" id="TIGR00406">
    <property type="entry name" value="prmA"/>
    <property type="match status" value="1"/>
</dbReference>
<dbReference type="PANTHER" id="PTHR43648">
    <property type="entry name" value="ELECTRON TRANSFER FLAVOPROTEIN BETA SUBUNIT LYSINE METHYLTRANSFERASE"/>
    <property type="match status" value="1"/>
</dbReference>
<dbReference type="PANTHER" id="PTHR43648:SF1">
    <property type="entry name" value="ELECTRON TRANSFER FLAVOPROTEIN BETA SUBUNIT LYSINE METHYLTRANSFERASE"/>
    <property type="match status" value="1"/>
</dbReference>
<dbReference type="Pfam" id="PF06325">
    <property type="entry name" value="PrmA"/>
    <property type="match status" value="1"/>
</dbReference>
<dbReference type="PIRSF" id="PIRSF000401">
    <property type="entry name" value="RPL11_MTase"/>
    <property type="match status" value="1"/>
</dbReference>
<dbReference type="SUPFAM" id="SSF53335">
    <property type="entry name" value="S-adenosyl-L-methionine-dependent methyltransferases"/>
    <property type="match status" value="1"/>
</dbReference>
<name>PRMA_BORPA</name>
<feature type="chain" id="PRO_0000192242" description="Ribosomal protein L11 methyltransferase">
    <location>
        <begin position="1"/>
        <end position="307"/>
    </location>
</feature>
<feature type="binding site" evidence="1">
    <location>
        <position position="162"/>
    </location>
    <ligand>
        <name>S-adenosyl-L-methionine</name>
        <dbReference type="ChEBI" id="CHEBI:59789"/>
    </ligand>
</feature>
<feature type="binding site" evidence="1">
    <location>
        <position position="183"/>
    </location>
    <ligand>
        <name>S-adenosyl-L-methionine</name>
        <dbReference type="ChEBI" id="CHEBI:59789"/>
    </ligand>
</feature>
<feature type="binding site" evidence="1">
    <location>
        <position position="205"/>
    </location>
    <ligand>
        <name>S-adenosyl-L-methionine</name>
        <dbReference type="ChEBI" id="CHEBI:59789"/>
    </ligand>
</feature>
<feature type="binding site" evidence="1">
    <location>
        <position position="244"/>
    </location>
    <ligand>
        <name>S-adenosyl-L-methionine</name>
        <dbReference type="ChEBI" id="CHEBI:59789"/>
    </ligand>
</feature>
<evidence type="ECO:0000255" key="1">
    <source>
        <dbReference type="HAMAP-Rule" id="MF_00735"/>
    </source>
</evidence>
<organism>
    <name type="scientific">Bordetella parapertussis (strain 12822 / ATCC BAA-587 / NCTC 13253)</name>
    <dbReference type="NCBI Taxonomy" id="257311"/>
    <lineage>
        <taxon>Bacteria</taxon>
        <taxon>Pseudomonadati</taxon>
        <taxon>Pseudomonadota</taxon>
        <taxon>Betaproteobacteria</taxon>
        <taxon>Burkholderiales</taxon>
        <taxon>Alcaligenaceae</taxon>
        <taxon>Bordetella</taxon>
    </lineage>
</organism>
<proteinExistence type="inferred from homology"/>